<reference key="1">
    <citation type="submission" date="2006-02" db="EMBL/GenBank/DDBJ databases">
        <title>Complete sequence of chromosome of Jannaschia sp. CCS1.</title>
        <authorList>
            <consortium name="US DOE Joint Genome Institute"/>
            <person name="Copeland A."/>
            <person name="Lucas S."/>
            <person name="Lapidus A."/>
            <person name="Barry K."/>
            <person name="Detter J.C."/>
            <person name="Glavina del Rio T."/>
            <person name="Hammon N."/>
            <person name="Israni S."/>
            <person name="Pitluck S."/>
            <person name="Brettin T."/>
            <person name="Bruce D."/>
            <person name="Han C."/>
            <person name="Tapia R."/>
            <person name="Gilna P."/>
            <person name="Chertkov O."/>
            <person name="Saunders E."/>
            <person name="Schmutz J."/>
            <person name="Larimer F."/>
            <person name="Land M."/>
            <person name="Kyrpides N."/>
            <person name="Lykidis A."/>
            <person name="Moran M.A."/>
            <person name="Belas R."/>
            <person name="Ye W."/>
            <person name="Buchan A."/>
            <person name="Gonzalez J.M."/>
            <person name="Schell M.A."/>
            <person name="Richardson P."/>
        </authorList>
    </citation>
    <scope>NUCLEOTIDE SEQUENCE [LARGE SCALE GENOMIC DNA]</scope>
    <source>
        <strain>CCS1</strain>
    </source>
</reference>
<gene>
    <name evidence="1" type="primary">yidC</name>
    <name type="ordered locus">Jann_0637</name>
</gene>
<comment type="function">
    <text evidence="1">Required for the insertion and/or proper folding and/or complex formation of integral membrane proteins into the membrane. Involved in integration of membrane proteins that insert both dependently and independently of the Sec translocase complex, as well as at least some lipoproteins. Aids folding of multispanning membrane proteins.</text>
</comment>
<comment type="subunit">
    <text evidence="1">Interacts with the Sec translocase complex via SecD. Specifically interacts with transmembrane segments of nascent integral membrane proteins during membrane integration.</text>
</comment>
<comment type="subcellular location">
    <subcellularLocation>
        <location evidence="1">Cell inner membrane</location>
        <topology evidence="1">Multi-pass membrane protein</topology>
    </subcellularLocation>
</comment>
<comment type="similarity">
    <text evidence="1">Belongs to the OXA1/ALB3/YidC family. Type 1 subfamily.</text>
</comment>
<dbReference type="EMBL" id="CP000264">
    <property type="protein sequence ID" value="ABD53554.1"/>
    <property type="molecule type" value="Genomic_DNA"/>
</dbReference>
<dbReference type="RefSeq" id="WP_011453762.1">
    <property type="nucleotide sequence ID" value="NC_007802.1"/>
</dbReference>
<dbReference type="SMR" id="Q28UQ8"/>
<dbReference type="STRING" id="290400.Jann_0637"/>
<dbReference type="KEGG" id="jan:Jann_0637"/>
<dbReference type="eggNOG" id="COG0706">
    <property type="taxonomic scope" value="Bacteria"/>
</dbReference>
<dbReference type="HOGENOM" id="CLU_016535_1_0_5"/>
<dbReference type="OrthoDB" id="9780552at2"/>
<dbReference type="Proteomes" id="UP000008326">
    <property type="component" value="Chromosome"/>
</dbReference>
<dbReference type="GO" id="GO:0005886">
    <property type="term" value="C:plasma membrane"/>
    <property type="evidence" value="ECO:0007669"/>
    <property type="project" value="UniProtKB-SubCell"/>
</dbReference>
<dbReference type="GO" id="GO:0032977">
    <property type="term" value="F:membrane insertase activity"/>
    <property type="evidence" value="ECO:0007669"/>
    <property type="project" value="InterPro"/>
</dbReference>
<dbReference type="GO" id="GO:0051205">
    <property type="term" value="P:protein insertion into membrane"/>
    <property type="evidence" value="ECO:0007669"/>
    <property type="project" value="TreeGrafter"/>
</dbReference>
<dbReference type="GO" id="GO:0015031">
    <property type="term" value="P:protein transport"/>
    <property type="evidence" value="ECO:0007669"/>
    <property type="project" value="UniProtKB-KW"/>
</dbReference>
<dbReference type="CDD" id="cd20070">
    <property type="entry name" value="5TM_YidC_Alb3"/>
    <property type="match status" value="1"/>
</dbReference>
<dbReference type="CDD" id="cd19961">
    <property type="entry name" value="EcYidC-like_peri"/>
    <property type="match status" value="1"/>
</dbReference>
<dbReference type="Gene3D" id="2.70.98.90">
    <property type="match status" value="1"/>
</dbReference>
<dbReference type="HAMAP" id="MF_01810">
    <property type="entry name" value="YidC_type1"/>
    <property type="match status" value="1"/>
</dbReference>
<dbReference type="InterPro" id="IPR019998">
    <property type="entry name" value="Membr_insert_YidC"/>
</dbReference>
<dbReference type="InterPro" id="IPR028053">
    <property type="entry name" value="Membr_insert_YidC_N"/>
</dbReference>
<dbReference type="InterPro" id="IPR001708">
    <property type="entry name" value="YidC/ALB3/OXA1/COX18"/>
</dbReference>
<dbReference type="InterPro" id="IPR028055">
    <property type="entry name" value="YidC/Oxa/ALB_C"/>
</dbReference>
<dbReference type="InterPro" id="IPR047196">
    <property type="entry name" value="YidC_ALB_C"/>
</dbReference>
<dbReference type="InterPro" id="IPR038221">
    <property type="entry name" value="YidC_periplasmic_sf"/>
</dbReference>
<dbReference type="NCBIfam" id="NF002353">
    <property type="entry name" value="PRK01318.1-4"/>
    <property type="match status" value="1"/>
</dbReference>
<dbReference type="NCBIfam" id="TIGR03593">
    <property type="entry name" value="yidC_nterm"/>
    <property type="match status" value="1"/>
</dbReference>
<dbReference type="NCBIfam" id="TIGR03592">
    <property type="entry name" value="yidC_oxa1_cterm"/>
    <property type="match status" value="1"/>
</dbReference>
<dbReference type="PANTHER" id="PTHR12428:SF65">
    <property type="entry name" value="CYTOCHROME C OXIDASE ASSEMBLY PROTEIN COX18, MITOCHONDRIAL"/>
    <property type="match status" value="1"/>
</dbReference>
<dbReference type="PANTHER" id="PTHR12428">
    <property type="entry name" value="OXA1"/>
    <property type="match status" value="1"/>
</dbReference>
<dbReference type="Pfam" id="PF02096">
    <property type="entry name" value="60KD_IMP"/>
    <property type="match status" value="1"/>
</dbReference>
<dbReference type="Pfam" id="PF14849">
    <property type="entry name" value="YidC_periplas"/>
    <property type="match status" value="1"/>
</dbReference>
<dbReference type="PRINTS" id="PR00701">
    <property type="entry name" value="60KDINNERMP"/>
</dbReference>
<dbReference type="PRINTS" id="PR01900">
    <property type="entry name" value="YIDCPROTEIN"/>
</dbReference>
<organism>
    <name type="scientific">Jannaschia sp. (strain CCS1)</name>
    <dbReference type="NCBI Taxonomy" id="290400"/>
    <lineage>
        <taxon>Bacteria</taxon>
        <taxon>Pseudomonadati</taxon>
        <taxon>Pseudomonadota</taxon>
        <taxon>Alphaproteobacteria</taxon>
        <taxon>Rhodobacterales</taxon>
        <taxon>Roseobacteraceae</taxon>
        <taxon>Jannaschia</taxon>
    </lineage>
</organism>
<protein>
    <recommendedName>
        <fullName evidence="1">Membrane protein insertase YidC</fullName>
    </recommendedName>
    <alternativeName>
        <fullName evidence="1">Foldase YidC</fullName>
    </alternativeName>
    <alternativeName>
        <fullName evidence="1">Membrane integrase YidC</fullName>
    </alternativeName>
    <alternativeName>
        <fullName evidence="1">Membrane protein YidC</fullName>
    </alternativeName>
</protein>
<sequence>MDDQNRNLILATGLSFVVILVWFLLFPPPEMVEDPNAIPPAAETGGVETDTGIALTPPVTVADAPAGADTTAPSEVALSEAARIDIDTPAVEGSISLLGGRIDDLSLRNYFTEVDGDQIVRLLSPVGSDDPYYALYGWTPSGDLGYADVPTSDTPWELESGTILTPDSPITLAWDNGSGLIFRRTIEIDDRFMFQVTQSVENTGGAEVNLAPYGIVARHGLPSDLQNFFILHEGVVRKVDGELSELGYSDLPDLDIIAREGVPAEVMEVETNGWIGFTDKYWMTTLIPGENQSFVSVVKYVPSAEIYQTEARLPYMSIAPGETAEVTTQLFAGAKEAEAIRDYENAEPGLIASLFGAEQDASRGEIPRFIDSIDWGWFYFLTKPLFWLLHWLNGAIGNMGLAIISLTLIVKAVLFPLAYRSYVSMAKMKELQPEIEKLKESAGDDRQKLQQGMMELYKKNKVNPAGGCLPILLQIPIFFSLYKVIFVTLELRHAPFFGWLNDLSAPDSSSIINLYGLLPNPAPEPESIMALIFIGILPLLLGISMWLQQKLNPAPTDAMQAQIFAWLPWVFMFMLGSFASGLLVYWIANNTLTFTQQYLIMRSQGFKPDVFGNIRSSFKKKAKEEK</sequence>
<accession>Q28UQ8</accession>
<name>YIDC_JANSC</name>
<proteinExistence type="inferred from homology"/>
<evidence type="ECO:0000255" key="1">
    <source>
        <dbReference type="HAMAP-Rule" id="MF_01810"/>
    </source>
</evidence>
<keyword id="KW-0997">Cell inner membrane</keyword>
<keyword id="KW-1003">Cell membrane</keyword>
<keyword id="KW-0143">Chaperone</keyword>
<keyword id="KW-0472">Membrane</keyword>
<keyword id="KW-0653">Protein transport</keyword>
<keyword id="KW-1185">Reference proteome</keyword>
<keyword id="KW-0812">Transmembrane</keyword>
<keyword id="KW-1133">Transmembrane helix</keyword>
<keyword id="KW-0813">Transport</keyword>
<feature type="chain" id="PRO_1000070110" description="Membrane protein insertase YidC">
    <location>
        <begin position="1"/>
        <end position="626"/>
    </location>
</feature>
<feature type="transmembrane region" description="Helical" evidence="1">
    <location>
        <begin position="8"/>
        <end position="28"/>
    </location>
</feature>
<feature type="transmembrane region" description="Helical" evidence="1">
    <location>
        <begin position="399"/>
        <end position="419"/>
    </location>
</feature>
<feature type="transmembrane region" description="Helical" evidence="1">
    <location>
        <begin position="469"/>
        <end position="489"/>
    </location>
</feature>
<feature type="transmembrane region" description="Helical" evidence="1">
    <location>
        <begin position="527"/>
        <end position="547"/>
    </location>
</feature>
<feature type="transmembrane region" description="Helical" evidence="1">
    <location>
        <begin position="563"/>
        <end position="583"/>
    </location>
</feature>